<comment type="similarity">
    <text evidence="1">Belongs to the UPF0325 family.</text>
</comment>
<dbReference type="EMBL" id="CP001048">
    <property type="protein sequence ID" value="ACC90082.1"/>
    <property type="molecule type" value="Genomic_DNA"/>
</dbReference>
<dbReference type="RefSeq" id="WP_002212127.1">
    <property type="nucleotide sequence ID" value="NZ_CP009780.1"/>
</dbReference>
<dbReference type="SMR" id="B2JZ38"/>
<dbReference type="KEGG" id="ypb:YPTS_3127"/>
<dbReference type="PATRIC" id="fig|502801.10.peg.2559"/>
<dbReference type="HAMAP" id="MF_01519">
    <property type="entry name" value="UPF0325"/>
    <property type="match status" value="1"/>
</dbReference>
<dbReference type="InterPro" id="IPR020911">
    <property type="entry name" value="UPF0325"/>
</dbReference>
<dbReference type="NCBIfam" id="NF010213">
    <property type="entry name" value="PRK13677.1"/>
    <property type="match status" value="1"/>
</dbReference>
<dbReference type="Pfam" id="PF11944">
    <property type="entry name" value="DUF3461"/>
    <property type="match status" value="1"/>
</dbReference>
<evidence type="ECO:0000255" key="1">
    <source>
        <dbReference type="HAMAP-Rule" id="MF_01519"/>
    </source>
</evidence>
<name>Y3127_YERPB</name>
<proteinExistence type="inferred from homology"/>
<organism>
    <name type="scientific">Yersinia pseudotuberculosis serotype IB (strain PB1/+)</name>
    <dbReference type="NCBI Taxonomy" id="502801"/>
    <lineage>
        <taxon>Bacteria</taxon>
        <taxon>Pseudomonadati</taxon>
        <taxon>Pseudomonadota</taxon>
        <taxon>Gammaproteobacteria</taxon>
        <taxon>Enterobacterales</taxon>
        <taxon>Yersiniaceae</taxon>
        <taxon>Yersinia</taxon>
    </lineage>
</organism>
<gene>
    <name type="ordered locus">YPTS_3127</name>
</gene>
<sequence>MYDNLKSLGITQPEDVDRYSLRQEANNDILKIYFRKDKGEFFAKSVKFKYPRQRKTVVSDNASHGYKEINEINPNLRYVIDELDQLCKRDQIEVDLKRKILDDLRHLESVVTNKIAEIEADLEKLTNGR</sequence>
<protein>
    <recommendedName>
        <fullName evidence="1">UPF0325 protein YPTS_3127</fullName>
    </recommendedName>
</protein>
<feature type="chain" id="PRO_1000198446" description="UPF0325 protein YPTS_3127">
    <location>
        <begin position="1"/>
        <end position="129"/>
    </location>
</feature>
<accession>B2JZ38</accession>
<reference key="1">
    <citation type="submission" date="2008-04" db="EMBL/GenBank/DDBJ databases">
        <title>Complete sequence of Yersinia pseudotuberculosis PB1/+.</title>
        <authorList>
            <person name="Copeland A."/>
            <person name="Lucas S."/>
            <person name="Lapidus A."/>
            <person name="Glavina del Rio T."/>
            <person name="Dalin E."/>
            <person name="Tice H."/>
            <person name="Bruce D."/>
            <person name="Goodwin L."/>
            <person name="Pitluck S."/>
            <person name="Munk A.C."/>
            <person name="Brettin T."/>
            <person name="Detter J.C."/>
            <person name="Han C."/>
            <person name="Tapia R."/>
            <person name="Schmutz J."/>
            <person name="Larimer F."/>
            <person name="Land M."/>
            <person name="Hauser L."/>
            <person name="Challacombe J.F."/>
            <person name="Green L."/>
            <person name="Lindler L.E."/>
            <person name="Nikolich M.P."/>
            <person name="Richardson P."/>
        </authorList>
    </citation>
    <scope>NUCLEOTIDE SEQUENCE [LARGE SCALE GENOMIC DNA]</scope>
    <source>
        <strain>PB1/+</strain>
    </source>
</reference>